<gene>
    <name evidence="1" type="primary">era</name>
    <name type="ordered locus">CLI_2998</name>
</gene>
<keyword id="KW-1003">Cell membrane</keyword>
<keyword id="KW-0963">Cytoplasm</keyword>
<keyword id="KW-0342">GTP-binding</keyword>
<keyword id="KW-0472">Membrane</keyword>
<keyword id="KW-0547">Nucleotide-binding</keyword>
<keyword id="KW-0690">Ribosome biogenesis</keyword>
<keyword id="KW-0694">RNA-binding</keyword>
<keyword id="KW-0699">rRNA-binding</keyword>
<sequence length="296" mass="34102">MFKSGFVTIVGRPNVGKSTLLNAIMKEKLSIVSCRPQTTRNNIQTILTEDNYQLVFVDTPGIHKPKHKLGEYMVKSASDAMKDVDLVLFLINPDEKPGRGDLFIIEQLKEVKVPVFLVLNKIDENPQEKVAETLKIYSELMEFEEIIPISALKGKNIDLLKELMFKYIPEGPQYYPEDMIIDQNERFIVAEIVREKALRLLSEEVPHGIAVEILQMKKNEKGTYHIEGNILCEKNSHKPIIIGKGGSKLKKISQYARQDIEAFLQSKVYIRLWVKVKEEWRDNQSLLKELGYKKMK</sequence>
<accession>A7GHG2</accession>
<evidence type="ECO:0000255" key="1">
    <source>
        <dbReference type="HAMAP-Rule" id="MF_00367"/>
    </source>
</evidence>
<evidence type="ECO:0000255" key="2">
    <source>
        <dbReference type="PROSITE-ProRule" id="PRU01050"/>
    </source>
</evidence>
<organism>
    <name type="scientific">Clostridium botulinum (strain Langeland / NCTC 10281 / Type F)</name>
    <dbReference type="NCBI Taxonomy" id="441772"/>
    <lineage>
        <taxon>Bacteria</taxon>
        <taxon>Bacillati</taxon>
        <taxon>Bacillota</taxon>
        <taxon>Clostridia</taxon>
        <taxon>Eubacteriales</taxon>
        <taxon>Clostridiaceae</taxon>
        <taxon>Clostridium</taxon>
    </lineage>
</organism>
<protein>
    <recommendedName>
        <fullName evidence="1">GTPase Era</fullName>
    </recommendedName>
</protein>
<reference key="1">
    <citation type="submission" date="2007-06" db="EMBL/GenBank/DDBJ databases">
        <authorList>
            <person name="Brinkac L.M."/>
            <person name="Daugherty S."/>
            <person name="Dodson R.J."/>
            <person name="Madupu R."/>
            <person name="Brown J.L."/>
            <person name="Bruce D."/>
            <person name="Detter C."/>
            <person name="Munk C."/>
            <person name="Smith L.A."/>
            <person name="Smith T.J."/>
            <person name="White O."/>
            <person name="Brettin T.S."/>
        </authorList>
    </citation>
    <scope>NUCLEOTIDE SEQUENCE [LARGE SCALE GENOMIC DNA]</scope>
    <source>
        <strain>Langeland / NCTC 10281 / Type F</strain>
    </source>
</reference>
<proteinExistence type="inferred from homology"/>
<dbReference type="EMBL" id="CP000728">
    <property type="protein sequence ID" value="ABS42529.1"/>
    <property type="molecule type" value="Genomic_DNA"/>
</dbReference>
<dbReference type="RefSeq" id="WP_012100721.1">
    <property type="nucleotide sequence ID" value="NC_009699.1"/>
</dbReference>
<dbReference type="SMR" id="A7GHG2"/>
<dbReference type="KEGG" id="cbf:CLI_2998"/>
<dbReference type="HOGENOM" id="CLU_038009_1_0_9"/>
<dbReference type="Proteomes" id="UP000002410">
    <property type="component" value="Chromosome"/>
</dbReference>
<dbReference type="GO" id="GO:0005829">
    <property type="term" value="C:cytosol"/>
    <property type="evidence" value="ECO:0007669"/>
    <property type="project" value="TreeGrafter"/>
</dbReference>
<dbReference type="GO" id="GO:0005886">
    <property type="term" value="C:plasma membrane"/>
    <property type="evidence" value="ECO:0007669"/>
    <property type="project" value="UniProtKB-SubCell"/>
</dbReference>
<dbReference type="GO" id="GO:0005525">
    <property type="term" value="F:GTP binding"/>
    <property type="evidence" value="ECO:0007669"/>
    <property type="project" value="UniProtKB-UniRule"/>
</dbReference>
<dbReference type="GO" id="GO:0003924">
    <property type="term" value="F:GTPase activity"/>
    <property type="evidence" value="ECO:0007669"/>
    <property type="project" value="UniProtKB-UniRule"/>
</dbReference>
<dbReference type="GO" id="GO:0043024">
    <property type="term" value="F:ribosomal small subunit binding"/>
    <property type="evidence" value="ECO:0007669"/>
    <property type="project" value="TreeGrafter"/>
</dbReference>
<dbReference type="GO" id="GO:0070181">
    <property type="term" value="F:small ribosomal subunit rRNA binding"/>
    <property type="evidence" value="ECO:0007669"/>
    <property type="project" value="UniProtKB-UniRule"/>
</dbReference>
<dbReference type="GO" id="GO:0000028">
    <property type="term" value="P:ribosomal small subunit assembly"/>
    <property type="evidence" value="ECO:0007669"/>
    <property type="project" value="TreeGrafter"/>
</dbReference>
<dbReference type="CDD" id="cd04163">
    <property type="entry name" value="Era"/>
    <property type="match status" value="1"/>
</dbReference>
<dbReference type="CDD" id="cd22534">
    <property type="entry name" value="KH-II_Era"/>
    <property type="match status" value="1"/>
</dbReference>
<dbReference type="FunFam" id="3.30.300.20:FF:000003">
    <property type="entry name" value="GTPase Era"/>
    <property type="match status" value="1"/>
</dbReference>
<dbReference type="FunFam" id="3.40.50.300:FF:000094">
    <property type="entry name" value="GTPase Era"/>
    <property type="match status" value="1"/>
</dbReference>
<dbReference type="Gene3D" id="3.30.300.20">
    <property type="match status" value="1"/>
</dbReference>
<dbReference type="Gene3D" id="3.40.50.300">
    <property type="entry name" value="P-loop containing nucleotide triphosphate hydrolases"/>
    <property type="match status" value="1"/>
</dbReference>
<dbReference type="HAMAP" id="MF_00367">
    <property type="entry name" value="GTPase_Era"/>
    <property type="match status" value="1"/>
</dbReference>
<dbReference type="InterPro" id="IPR030388">
    <property type="entry name" value="G_ERA_dom"/>
</dbReference>
<dbReference type="InterPro" id="IPR006073">
    <property type="entry name" value="GTP-bd"/>
</dbReference>
<dbReference type="InterPro" id="IPR005662">
    <property type="entry name" value="GTPase_Era-like"/>
</dbReference>
<dbReference type="InterPro" id="IPR015946">
    <property type="entry name" value="KH_dom-like_a/b"/>
</dbReference>
<dbReference type="InterPro" id="IPR004044">
    <property type="entry name" value="KH_dom_type_2"/>
</dbReference>
<dbReference type="InterPro" id="IPR009019">
    <property type="entry name" value="KH_sf_prok-type"/>
</dbReference>
<dbReference type="InterPro" id="IPR027417">
    <property type="entry name" value="P-loop_NTPase"/>
</dbReference>
<dbReference type="InterPro" id="IPR005225">
    <property type="entry name" value="Small_GTP-bd"/>
</dbReference>
<dbReference type="NCBIfam" id="TIGR00436">
    <property type="entry name" value="era"/>
    <property type="match status" value="1"/>
</dbReference>
<dbReference type="NCBIfam" id="NF000908">
    <property type="entry name" value="PRK00089.1"/>
    <property type="match status" value="1"/>
</dbReference>
<dbReference type="NCBIfam" id="TIGR00231">
    <property type="entry name" value="small_GTP"/>
    <property type="match status" value="1"/>
</dbReference>
<dbReference type="PANTHER" id="PTHR42698">
    <property type="entry name" value="GTPASE ERA"/>
    <property type="match status" value="1"/>
</dbReference>
<dbReference type="PANTHER" id="PTHR42698:SF1">
    <property type="entry name" value="GTPASE ERA, MITOCHONDRIAL"/>
    <property type="match status" value="1"/>
</dbReference>
<dbReference type="Pfam" id="PF07650">
    <property type="entry name" value="KH_2"/>
    <property type="match status" value="1"/>
</dbReference>
<dbReference type="Pfam" id="PF01926">
    <property type="entry name" value="MMR_HSR1"/>
    <property type="match status" value="1"/>
</dbReference>
<dbReference type="SUPFAM" id="SSF52540">
    <property type="entry name" value="P-loop containing nucleoside triphosphate hydrolases"/>
    <property type="match status" value="1"/>
</dbReference>
<dbReference type="SUPFAM" id="SSF54814">
    <property type="entry name" value="Prokaryotic type KH domain (KH-domain type II)"/>
    <property type="match status" value="1"/>
</dbReference>
<dbReference type="PROSITE" id="PS51713">
    <property type="entry name" value="G_ERA"/>
    <property type="match status" value="1"/>
</dbReference>
<dbReference type="PROSITE" id="PS50823">
    <property type="entry name" value="KH_TYPE_2"/>
    <property type="match status" value="1"/>
</dbReference>
<comment type="function">
    <text evidence="1">An essential GTPase that binds both GDP and GTP, with rapid nucleotide exchange. Plays a role in 16S rRNA processing and 30S ribosomal subunit biogenesis and possibly also in cell cycle regulation and energy metabolism.</text>
</comment>
<comment type="subunit">
    <text evidence="1">Monomer.</text>
</comment>
<comment type="subcellular location">
    <subcellularLocation>
        <location>Cytoplasm</location>
    </subcellularLocation>
    <subcellularLocation>
        <location evidence="1">Cell membrane</location>
        <topology evidence="1">Peripheral membrane protein</topology>
    </subcellularLocation>
</comment>
<comment type="similarity">
    <text evidence="1 2">Belongs to the TRAFAC class TrmE-Era-EngA-EngB-Septin-like GTPase superfamily. Era GTPase family.</text>
</comment>
<name>ERA_CLOBL</name>
<feature type="chain" id="PRO_1000079673" description="GTPase Era">
    <location>
        <begin position="1"/>
        <end position="296"/>
    </location>
</feature>
<feature type="domain" description="Era-type G" evidence="2">
    <location>
        <begin position="3"/>
        <end position="170"/>
    </location>
</feature>
<feature type="domain" description="KH type-2" evidence="1">
    <location>
        <begin position="201"/>
        <end position="278"/>
    </location>
</feature>
<feature type="region of interest" description="G1" evidence="2">
    <location>
        <begin position="11"/>
        <end position="18"/>
    </location>
</feature>
<feature type="region of interest" description="G2" evidence="2">
    <location>
        <begin position="37"/>
        <end position="41"/>
    </location>
</feature>
<feature type="region of interest" description="G3" evidence="2">
    <location>
        <begin position="58"/>
        <end position="61"/>
    </location>
</feature>
<feature type="region of interest" description="G4" evidence="2">
    <location>
        <begin position="120"/>
        <end position="123"/>
    </location>
</feature>
<feature type="region of interest" description="G5" evidence="2">
    <location>
        <begin position="149"/>
        <end position="151"/>
    </location>
</feature>
<feature type="binding site" evidence="1">
    <location>
        <begin position="11"/>
        <end position="18"/>
    </location>
    <ligand>
        <name>GTP</name>
        <dbReference type="ChEBI" id="CHEBI:37565"/>
    </ligand>
</feature>
<feature type="binding site" evidence="1">
    <location>
        <begin position="58"/>
        <end position="62"/>
    </location>
    <ligand>
        <name>GTP</name>
        <dbReference type="ChEBI" id="CHEBI:37565"/>
    </ligand>
</feature>
<feature type="binding site" evidence="1">
    <location>
        <begin position="120"/>
        <end position="123"/>
    </location>
    <ligand>
        <name>GTP</name>
        <dbReference type="ChEBI" id="CHEBI:37565"/>
    </ligand>
</feature>